<evidence type="ECO:0000250" key="1"/>
<evidence type="ECO:0000255" key="2">
    <source>
        <dbReference type="HAMAP-Rule" id="MF_01988"/>
    </source>
</evidence>
<name>SUCD_ECOL6</name>
<protein>
    <recommendedName>
        <fullName evidence="2">Succinate--CoA ligase [ADP-forming] subunit alpha</fullName>
        <ecNumber evidence="2">6.2.1.5</ecNumber>
    </recommendedName>
    <alternativeName>
        <fullName evidence="2">Succinyl-CoA synthetase subunit alpha</fullName>
        <shortName evidence="2">SCS-alpha</shortName>
    </alternativeName>
</protein>
<organism>
    <name type="scientific">Escherichia coli O6:H1 (strain CFT073 / ATCC 700928 / UPEC)</name>
    <dbReference type="NCBI Taxonomy" id="199310"/>
    <lineage>
        <taxon>Bacteria</taxon>
        <taxon>Pseudomonadati</taxon>
        <taxon>Pseudomonadota</taxon>
        <taxon>Gammaproteobacteria</taxon>
        <taxon>Enterobacterales</taxon>
        <taxon>Enterobacteriaceae</taxon>
        <taxon>Escherichia</taxon>
    </lineage>
</organism>
<proteinExistence type="inferred from homology"/>
<dbReference type="EC" id="6.2.1.5" evidence="2"/>
<dbReference type="EMBL" id="AE014075">
    <property type="protein sequence ID" value="AAN79279.1"/>
    <property type="molecule type" value="Genomic_DNA"/>
</dbReference>
<dbReference type="RefSeq" id="WP_000025458.1">
    <property type="nucleotide sequence ID" value="NZ_CP051263.1"/>
</dbReference>
<dbReference type="SMR" id="P0AGF0"/>
<dbReference type="STRING" id="199310.c0806"/>
<dbReference type="GeneID" id="93776756"/>
<dbReference type="KEGG" id="ecc:c0806"/>
<dbReference type="eggNOG" id="COG0074">
    <property type="taxonomic scope" value="Bacteria"/>
</dbReference>
<dbReference type="HOGENOM" id="CLU_052104_0_0_6"/>
<dbReference type="BioCyc" id="ECOL199310:C0806-MONOMER"/>
<dbReference type="UniPathway" id="UPA00223">
    <property type="reaction ID" value="UER00999"/>
</dbReference>
<dbReference type="Proteomes" id="UP000001410">
    <property type="component" value="Chromosome"/>
</dbReference>
<dbReference type="GO" id="GO:0009361">
    <property type="term" value="C:succinate-CoA ligase complex (ADP-forming)"/>
    <property type="evidence" value="ECO:0007669"/>
    <property type="project" value="TreeGrafter"/>
</dbReference>
<dbReference type="GO" id="GO:0000166">
    <property type="term" value="F:nucleotide binding"/>
    <property type="evidence" value="ECO:0007669"/>
    <property type="project" value="UniProtKB-KW"/>
</dbReference>
<dbReference type="GO" id="GO:0004775">
    <property type="term" value="F:succinate-CoA ligase (ADP-forming) activity"/>
    <property type="evidence" value="ECO:0007669"/>
    <property type="project" value="UniProtKB-UniRule"/>
</dbReference>
<dbReference type="GO" id="GO:0004776">
    <property type="term" value="F:succinate-CoA ligase (GDP-forming) activity"/>
    <property type="evidence" value="ECO:0007669"/>
    <property type="project" value="TreeGrafter"/>
</dbReference>
<dbReference type="GO" id="GO:0006099">
    <property type="term" value="P:tricarboxylic acid cycle"/>
    <property type="evidence" value="ECO:0007669"/>
    <property type="project" value="UniProtKB-UniRule"/>
</dbReference>
<dbReference type="FunFam" id="3.40.50.261:FF:000002">
    <property type="entry name" value="Succinate--CoA ligase [ADP-forming] subunit alpha"/>
    <property type="match status" value="1"/>
</dbReference>
<dbReference type="FunFam" id="3.40.50.720:FF:000002">
    <property type="entry name" value="Succinate--CoA ligase [ADP-forming] subunit alpha"/>
    <property type="match status" value="1"/>
</dbReference>
<dbReference type="Gene3D" id="3.40.50.720">
    <property type="entry name" value="NAD(P)-binding Rossmann-like Domain"/>
    <property type="match status" value="1"/>
</dbReference>
<dbReference type="Gene3D" id="3.40.50.261">
    <property type="entry name" value="Succinyl-CoA synthetase domains"/>
    <property type="match status" value="1"/>
</dbReference>
<dbReference type="HAMAP" id="MF_01988">
    <property type="entry name" value="Succ_CoA_alpha"/>
    <property type="match status" value="1"/>
</dbReference>
<dbReference type="InterPro" id="IPR017440">
    <property type="entry name" value="Cit_synth/succinyl-CoA_lig_AS"/>
</dbReference>
<dbReference type="InterPro" id="IPR033847">
    <property type="entry name" value="Citrt_syn/SCS-alpha_CS"/>
</dbReference>
<dbReference type="InterPro" id="IPR003781">
    <property type="entry name" value="CoA-bd"/>
</dbReference>
<dbReference type="InterPro" id="IPR005810">
    <property type="entry name" value="CoA_lig_alpha"/>
</dbReference>
<dbReference type="InterPro" id="IPR036291">
    <property type="entry name" value="NAD(P)-bd_dom_sf"/>
</dbReference>
<dbReference type="InterPro" id="IPR005811">
    <property type="entry name" value="SUCC_ACL_C"/>
</dbReference>
<dbReference type="InterPro" id="IPR016102">
    <property type="entry name" value="Succinyl-CoA_synth-like"/>
</dbReference>
<dbReference type="NCBIfam" id="NF004230">
    <property type="entry name" value="PRK05678.1"/>
    <property type="match status" value="1"/>
</dbReference>
<dbReference type="NCBIfam" id="TIGR01019">
    <property type="entry name" value="sucCoAalpha"/>
    <property type="match status" value="1"/>
</dbReference>
<dbReference type="PANTHER" id="PTHR11117:SF2">
    <property type="entry name" value="SUCCINATE--COA LIGASE [ADP_GDP-FORMING] SUBUNIT ALPHA, MITOCHONDRIAL"/>
    <property type="match status" value="1"/>
</dbReference>
<dbReference type="PANTHER" id="PTHR11117">
    <property type="entry name" value="SUCCINYL-COA LIGASE SUBUNIT ALPHA"/>
    <property type="match status" value="1"/>
</dbReference>
<dbReference type="Pfam" id="PF02629">
    <property type="entry name" value="CoA_binding"/>
    <property type="match status" value="1"/>
</dbReference>
<dbReference type="Pfam" id="PF00549">
    <property type="entry name" value="Ligase_CoA"/>
    <property type="match status" value="1"/>
</dbReference>
<dbReference type="PIRSF" id="PIRSF001553">
    <property type="entry name" value="SucCS_alpha"/>
    <property type="match status" value="1"/>
</dbReference>
<dbReference type="PRINTS" id="PR01798">
    <property type="entry name" value="SCOASYNTHASE"/>
</dbReference>
<dbReference type="SMART" id="SM00881">
    <property type="entry name" value="CoA_binding"/>
    <property type="match status" value="1"/>
</dbReference>
<dbReference type="SUPFAM" id="SSF51735">
    <property type="entry name" value="NAD(P)-binding Rossmann-fold domains"/>
    <property type="match status" value="1"/>
</dbReference>
<dbReference type="SUPFAM" id="SSF52210">
    <property type="entry name" value="Succinyl-CoA synthetase domains"/>
    <property type="match status" value="1"/>
</dbReference>
<dbReference type="PROSITE" id="PS01216">
    <property type="entry name" value="SUCCINYL_COA_LIG_1"/>
    <property type="match status" value="1"/>
</dbReference>
<dbReference type="PROSITE" id="PS00399">
    <property type="entry name" value="SUCCINYL_COA_LIG_2"/>
    <property type="match status" value="1"/>
</dbReference>
<gene>
    <name evidence="2" type="primary">sucD</name>
    <name type="ordered locus">c0806</name>
</gene>
<feature type="initiator methionine" description="Removed" evidence="1">
    <location>
        <position position="1"/>
    </location>
</feature>
<feature type="chain" id="PRO_0000102793" description="Succinate--CoA ligase [ADP-forming] subunit alpha">
    <location>
        <begin position="2"/>
        <end position="289"/>
    </location>
</feature>
<feature type="active site" description="Tele-phosphohistidine intermediate" evidence="2">
    <location>
        <position position="247"/>
    </location>
</feature>
<feature type="binding site" evidence="2">
    <location>
        <begin position="17"/>
        <end position="20"/>
    </location>
    <ligand>
        <name>CoA</name>
        <dbReference type="ChEBI" id="CHEBI:57287"/>
    </ligand>
</feature>
<feature type="binding site" evidence="2">
    <location>
        <position position="43"/>
    </location>
    <ligand>
        <name>CoA</name>
        <dbReference type="ChEBI" id="CHEBI:57287"/>
    </ligand>
</feature>
<feature type="binding site" evidence="2">
    <location>
        <begin position="96"/>
        <end position="98"/>
    </location>
    <ligand>
        <name>CoA</name>
        <dbReference type="ChEBI" id="CHEBI:57287"/>
    </ligand>
</feature>
<feature type="binding site" evidence="2">
    <location>
        <position position="159"/>
    </location>
    <ligand>
        <name>substrate</name>
        <note>ligand shared with subunit beta</note>
    </ligand>
</feature>
<accession>P0AGF0</accession>
<accession>P07459</accession>
<keyword id="KW-0436">Ligase</keyword>
<keyword id="KW-0547">Nucleotide-binding</keyword>
<keyword id="KW-1185">Reference proteome</keyword>
<keyword id="KW-0816">Tricarboxylic acid cycle</keyword>
<reference key="1">
    <citation type="journal article" date="2002" name="Proc. Natl. Acad. Sci. U.S.A.">
        <title>Extensive mosaic structure revealed by the complete genome sequence of uropathogenic Escherichia coli.</title>
        <authorList>
            <person name="Welch R.A."/>
            <person name="Burland V."/>
            <person name="Plunkett G. III"/>
            <person name="Redford P."/>
            <person name="Roesch P."/>
            <person name="Rasko D."/>
            <person name="Buckles E.L."/>
            <person name="Liou S.-R."/>
            <person name="Boutin A."/>
            <person name="Hackett J."/>
            <person name="Stroud D."/>
            <person name="Mayhew G.F."/>
            <person name="Rose D.J."/>
            <person name="Zhou S."/>
            <person name="Schwartz D.C."/>
            <person name="Perna N.T."/>
            <person name="Mobley H.L.T."/>
            <person name="Donnenberg M.S."/>
            <person name="Blattner F.R."/>
        </authorList>
    </citation>
    <scope>NUCLEOTIDE SEQUENCE [LARGE SCALE GENOMIC DNA]</scope>
    <source>
        <strain>CFT073 / ATCC 700928 / UPEC</strain>
    </source>
</reference>
<comment type="function">
    <text evidence="2">Succinyl-CoA synthetase functions in the citric acid cycle (TCA), coupling the hydrolysis of succinyl-CoA to the synthesis of either ATP or GTP and thus represents the only step of substrate-level phosphorylation in the TCA. The alpha subunit of the enzyme binds the substrates coenzyme A and phosphate, while succinate binding and nucleotide specificity is provided by the beta subunit.</text>
</comment>
<comment type="catalytic activity">
    <reaction evidence="2">
        <text>succinate + ATP + CoA = succinyl-CoA + ADP + phosphate</text>
        <dbReference type="Rhea" id="RHEA:17661"/>
        <dbReference type="ChEBI" id="CHEBI:30031"/>
        <dbReference type="ChEBI" id="CHEBI:30616"/>
        <dbReference type="ChEBI" id="CHEBI:43474"/>
        <dbReference type="ChEBI" id="CHEBI:57287"/>
        <dbReference type="ChEBI" id="CHEBI:57292"/>
        <dbReference type="ChEBI" id="CHEBI:456216"/>
        <dbReference type="EC" id="6.2.1.5"/>
    </reaction>
    <physiologicalReaction direction="right-to-left" evidence="2">
        <dbReference type="Rhea" id="RHEA:17663"/>
    </physiologicalReaction>
</comment>
<comment type="catalytic activity">
    <reaction evidence="2">
        <text>GTP + succinate + CoA = succinyl-CoA + GDP + phosphate</text>
        <dbReference type="Rhea" id="RHEA:22120"/>
        <dbReference type="ChEBI" id="CHEBI:30031"/>
        <dbReference type="ChEBI" id="CHEBI:37565"/>
        <dbReference type="ChEBI" id="CHEBI:43474"/>
        <dbReference type="ChEBI" id="CHEBI:57287"/>
        <dbReference type="ChEBI" id="CHEBI:57292"/>
        <dbReference type="ChEBI" id="CHEBI:58189"/>
    </reaction>
    <physiologicalReaction direction="right-to-left" evidence="2">
        <dbReference type="Rhea" id="RHEA:22122"/>
    </physiologicalReaction>
</comment>
<comment type="pathway">
    <text evidence="2">Carbohydrate metabolism; tricarboxylic acid cycle; succinate from succinyl-CoA (ligase route): step 1/1.</text>
</comment>
<comment type="subunit">
    <text evidence="2">Heterotetramer of two alpha and two beta subunits.</text>
</comment>
<comment type="similarity">
    <text evidence="2">Belongs to the succinate/malate CoA ligase alpha subunit family.</text>
</comment>
<sequence length="289" mass="29777">MSILIDKNTKVICQGFTGSQGTFHSEQAIAYGTKMVGGVTPGKGGTTHLGLPVFNTVREAVAATGATASVIYVPAPFCKDSILEAIDAGIKLIITITEGIPTLDMLTVKVKLDEAGVRMIGPNCPGVITPGECKIGIQPGHIHKPGKVGIVSRSGTLTYEAVKQTTDYGFGQSTCVGIGGDPIPGSNFIDILEMFEKDPQTEAIVMIGEIGGSAEEEAAAYIKEHVTKPVVGYIAGVTAPKGKRMGHAGAIIAGGKGTADEKFAALEAAGVKTVRSLADIGEALKTVLK</sequence>